<keyword id="KW-0143">Chaperone</keyword>
<keyword id="KW-0963">Cytoplasm</keyword>
<keyword id="KW-0533">Nickel</keyword>
<keyword id="KW-0996">Nickel insertion</keyword>
<gene>
    <name evidence="1" type="primary">ureE</name>
</gene>
<protein>
    <recommendedName>
        <fullName evidence="1">Urease accessory protein UreE</fullName>
    </recommendedName>
</protein>
<comment type="function">
    <text evidence="1">Involved in urease metallocenter assembly. Binds nickel. Probably functions as a nickel donor during metallocenter assembly.</text>
</comment>
<comment type="subcellular location">
    <subcellularLocation>
        <location evidence="1">Cytoplasm</location>
    </subcellularLocation>
</comment>
<comment type="similarity">
    <text evidence="1">Belongs to the UreE family.</text>
</comment>
<evidence type="ECO:0000255" key="1">
    <source>
        <dbReference type="HAMAP-Rule" id="MF_00822"/>
    </source>
</evidence>
<feature type="chain" id="PRO_0000223452" description="Urease accessory protein UreE">
    <location>
        <begin position="1"/>
        <end position="149"/>
    </location>
</feature>
<reference key="1">
    <citation type="journal article" date="2004" name="Int. J. Syst. Evol. Microbiol.">
        <title>Postgenomic taxonomy of human ureaplasmas - a case study based on multiple gene sequences.</title>
        <authorList>
            <person name="Kong F."/>
            <person name="Gilbert G.L."/>
        </authorList>
    </citation>
    <scope>NUCLEOTIDE SEQUENCE [GENOMIC DNA]</scope>
    <source>
        <strain>ATCC 27618 / CIP 103755 / NCTC 10177 / T960 / Serovar 8</strain>
        <strain>ATCC 27814 / 23 / Serovar 2</strain>
        <strain>ATCC 27816 / 58 / Serovar 4</strain>
        <strain>ATCC 27817 / 354 / Serovar 5</strain>
        <strain>ATCC 27819 / Co / Serovar 7</strain>
        <strain>ATCC 33175 / Vancouver / Serovar 9</strain>
        <strain>ATCC 33695 / K2 / Serovar 11</strain>
        <strain>ATCC 33696 / U24 / Serovar 12</strain>
        <strain>ATCC 33698 / U38 / Serovar 13</strain>
    </source>
</reference>
<sequence>MTVFKEILGNITDIENVESYQIENIHLTSDDVLKRVIIISSDQNVEYGIRLEEDKKLRDGDILYKDDYKLVVIRLELSDVLIITARTIGEMAQIAHNLGNRHMPAQFTETQMIVPYDYLVEQYLQDNKALYEREKIKLKEAFRHCSDAK</sequence>
<organism>
    <name type="scientific">Ureaplasma urealyticum</name>
    <name type="common">Ureaplasma urealyticum biotype 2</name>
    <dbReference type="NCBI Taxonomy" id="2130"/>
    <lineage>
        <taxon>Bacteria</taxon>
        <taxon>Bacillati</taxon>
        <taxon>Mycoplasmatota</taxon>
        <taxon>Mycoplasmoidales</taxon>
        <taxon>Mycoplasmoidaceae</taxon>
        <taxon>Ureaplasma</taxon>
    </lineage>
</organism>
<proteinExistence type="inferred from homology"/>
<name>UREE_UREUR</name>
<dbReference type="EMBL" id="AF085720">
    <property type="protein sequence ID" value="AAG10303.1"/>
    <property type="molecule type" value="Genomic_DNA"/>
</dbReference>
<dbReference type="EMBL" id="AF085721">
    <property type="protein sequence ID" value="AAG10308.1"/>
    <property type="molecule type" value="Genomic_DNA"/>
</dbReference>
<dbReference type="EMBL" id="AF085722">
    <property type="protein sequence ID" value="AAG10313.1"/>
    <property type="molecule type" value="Genomic_DNA"/>
</dbReference>
<dbReference type="EMBL" id="AF085723">
    <property type="protein sequence ID" value="AAG10318.1"/>
    <property type="molecule type" value="Genomic_DNA"/>
</dbReference>
<dbReference type="EMBL" id="AF085724">
    <property type="protein sequence ID" value="AAG10323.1"/>
    <property type="molecule type" value="Genomic_DNA"/>
</dbReference>
<dbReference type="EMBL" id="AF085725">
    <property type="protein sequence ID" value="AAG10328.1"/>
    <property type="molecule type" value="Genomic_DNA"/>
</dbReference>
<dbReference type="EMBL" id="AF085727">
    <property type="protein sequence ID" value="AAG10338.1"/>
    <property type="molecule type" value="Genomic_DNA"/>
</dbReference>
<dbReference type="EMBL" id="AF085728">
    <property type="protein sequence ID" value="AAG10343.1"/>
    <property type="molecule type" value="Genomic_DNA"/>
</dbReference>
<dbReference type="EMBL" id="AF085729">
    <property type="protein sequence ID" value="AAG10348.1"/>
    <property type="molecule type" value="Genomic_DNA"/>
</dbReference>
<dbReference type="RefSeq" id="WP_004026116.1">
    <property type="nucleotide sequence ID" value="NZ_QOKT01000007.1"/>
</dbReference>
<dbReference type="SMR" id="P0CB04"/>
<dbReference type="OMA" id="YVDLEWF"/>
<dbReference type="GO" id="GO:0005737">
    <property type="term" value="C:cytoplasm"/>
    <property type="evidence" value="ECO:0007669"/>
    <property type="project" value="UniProtKB-SubCell"/>
</dbReference>
<dbReference type="GO" id="GO:0016151">
    <property type="term" value="F:nickel cation binding"/>
    <property type="evidence" value="ECO:0007669"/>
    <property type="project" value="UniProtKB-UniRule"/>
</dbReference>
<dbReference type="GO" id="GO:0051082">
    <property type="term" value="F:unfolded protein binding"/>
    <property type="evidence" value="ECO:0007669"/>
    <property type="project" value="UniProtKB-UniRule"/>
</dbReference>
<dbReference type="GO" id="GO:0006457">
    <property type="term" value="P:protein folding"/>
    <property type="evidence" value="ECO:0007669"/>
    <property type="project" value="InterPro"/>
</dbReference>
<dbReference type="GO" id="GO:0065003">
    <property type="term" value="P:protein-containing complex assembly"/>
    <property type="evidence" value="ECO:0007669"/>
    <property type="project" value="InterPro"/>
</dbReference>
<dbReference type="GO" id="GO:0019627">
    <property type="term" value="P:urea metabolic process"/>
    <property type="evidence" value="ECO:0007669"/>
    <property type="project" value="InterPro"/>
</dbReference>
<dbReference type="CDD" id="cd00571">
    <property type="entry name" value="UreE"/>
    <property type="match status" value="1"/>
</dbReference>
<dbReference type="Gene3D" id="2.60.260.20">
    <property type="entry name" value="Urease metallochaperone UreE, N-terminal domain"/>
    <property type="match status" value="1"/>
</dbReference>
<dbReference type="Gene3D" id="3.30.70.790">
    <property type="entry name" value="UreE, C-terminal domain"/>
    <property type="match status" value="1"/>
</dbReference>
<dbReference type="HAMAP" id="MF_00822">
    <property type="entry name" value="UreE"/>
    <property type="match status" value="1"/>
</dbReference>
<dbReference type="InterPro" id="IPR012406">
    <property type="entry name" value="UreE"/>
</dbReference>
<dbReference type="InterPro" id="IPR007864">
    <property type="entry name" value="UreE_C_dom"/>
</dbReference>
<dbReference type="InterPro" id="IPR004029">
    <property type="entry name" value="UreE_N"/>
</dbReference>
<dbReference type="InterPro" id="IPR036118">
    <property type="entry name" value="UreE_N_sf"/>
</dbReference>
<dbReference type="NCBIfam" id="NF010710">
    <property type="entry name" value="PRK14112.1"/>
    <property type="match status" value="1"/>
</dbReference>
<dbReference type="Pfam" id="PF05194">
    <property type="entry name" value="UreE_C"/>
    <property type="match status" value="1"/>
</dbReference>
<dbReference type="Pfam" id="PF02814">
    <property type="entry name" value="UreE_N"/>
    <property type="match status" value="1"/>
</dbReference>
<dbReference type="PIRSF" id="PIRSF036402">
    <property type="entry name" value="Ureas_acces_UreE"/>
    <property type="match status" value="1"/>
</dbReference>
<dbReference type="SMART" id="SM00988">
    <property type="entry name" value="UreE_N"/>
    <property type="match status" value="1"/>
</dbReference>
<dbReference type="SUPFAM" id="SSF69737">
    <property type="entry name" value="Urease metallochaperone UreE, C-terminal domain"/>
    <property type="match status" value="1"/>
</dbReference>
<dbReference type="SUPFAM" id="SSF69287">
    <property type="entry name" value="Urease metallochaperone UreE, N-terminal domain"/>
    <property type="match status" value="1"/>
</dbReference>
<accession>P0CB04</accession>
<accession>Q7BSD7</accession>
<accession>Q7BSE1</accession>
<accession>Q7BSE5</accession>
<accession>Q7BSE9</accession>
<accession>Q7BSF3</accession>
<accession>Q7BSF7</accession>
<accession>Q7BSG1</accession>
<accession>Q7BSG5</accession>
<accession>Q7BSG9</accession>
<accession>Q9ETE2</accession>